<feature type="chain" id="PRO_0000453858" description="FAD-dependent monooxygenase ausM">
    <location>
        <begin position="1"/>
        <end position="463"/>
    </location>
</feature>
<feature type="transmembrane region" description="Helical" evidence="3">
    <location>
        <begin position="443"/>
        <end position="463"/>
    </location>
</feature>
<feature type="active site" evidence="1">
    <location>
        <position position="217"/>
    </location>
</feature>
<feature type="binding site" evidence="1">
    <location>
        <position position="40"/>
    </location>
    <ligand>
        <name>FAD</name>
        <dbReference type="ChEBI" id="CHEBI:57692"/>
    </ligand>
</feature>
<feature type="binding site" evidence="1">
    <location>
        <position position="54"/>
    </location>
    <ligand>
        <name>FAD</name>
        <dbReference type="ChEBI" id="CHEBI:57692"/>
    </ligand>
</feature>
<feature type="binding site" evidence="1">
    <location>
        <position position="113"/>
    </location>
    <ligand>
        <name>FAD</name>
        <dbReference type="ChEBI" id="CHEBI:57692"/>
    </ligand>
</feature>
<feature type="binding site" evidence="1">
    <location>
        <position position="309"/>
    </location>
    <ligand>
        <name>FAD</name>
        <dbReference type="ChEBI" id="CHEBI:57692"/>
    </ligand>
</feature>
<feature type="binding site" evidence="1">
    <location>
        <position position="322"/>
    </location>
    <ligand>
        <name>FAD</name>
        <dbReference type="ChEBI" id="CHEBI:57692"/>
    </ligand>
</feature>
<reference key="1">
    <citation type="journal article" date="2016" name="Genome Announc.">
        <title>Draft genome sequences of fungus Aspergillus calidoustus.</title>
        <authorList>
            <person name="Horn F."/>
            <person name="Linde J."/>
            <person name="Mattern D.J."/>
            <person name="Walther G."/>
            <person name="Guthke R."/>
            <person name="Scherlach K."/>
            <person name="Martin K."/>
            <person name="Brakhage A.A."/>
            <person name="Petzke L."/>
            <person name="Valiante V."/>
        </authorList>
    </citation>
    <scope>NUCLEOTIDE SEQUENCE [LARGE SCALE GENOMIC DNA]</scope>
    <source>
        <strain>SF006504</strain>
    </source>
</reference>
<reference key="2">
    <citation type="journal article" date="2017" name="ACS Chem. Biol.">
        <title>Discovery of an Extended Austinoid Biosynthetic Pathway in Aspergillus calidoustus.</title>
        <authorList>
            <person name="Valiante V."/>
            <person name="Mattern D.J."/>
            <person name="Schueffler A."/>
            <person name="Horn F."/>
            <person name="Walther G."/>
            <person name="Scherlach K."/>
            <person name="Petzke L."/>
            <person name="Dickhaut J."/>
            <person name="Guthke R."/>
            <person name="Hertweck C."/>
            <person name="Nett M."/>
            <person name="Thines E."/>
            <person name="Brakhage A.A."/>
        </authorList>
    </citation>
    <scope>FUNCTION</scope>
    <scope>PATHWAY</scope>
</reference>
<reference key="3">
    <citation type="journal article" date="2017" name="ACS Chem. Biol.">
        <title>Rewiring of the austinoid biosynthetic pathway in filamentous fungi.</title>
        <authorList>
            <person name="Mattern D.J."/>
            <person name="Valiante V."/>
            <person name="Horn F."/>
            <person name="Petzke L."/>
            <person name="Brakhage A.A."/>
        </authorList>
    </citation>
    <scope>FUNCTION</scope>
</reference>
<accession>A0A0U5CJU6</accession>
<name>AUSM_ASPCI</name>
<keyword id="KW-0274">FAD</keyword>
<keyword id="KW-0285">Flavoprotein</keyword>
<keyword id="KW-0472">Membrane</keyword>
<keyword id="KW-0503">Monooxygenase</keyword>
<keyword id="KW-0560">Oxidoreductase</keyword>
<keyword id="KW-1185">Reference proteome</keyword>
<keyword id="KW-0812">Transmembrane</keyword>
<keyword id="KW-1133">Transmembrane helix</keyword>
<proteinExistence type="inferred from homology"/>
<sequence length="463" mass="51063">MSDTSATKTEIRVIIVGGSVAGLTLAHCLAKANISHVVLEKRAEISPQEGAFLGIWPNGGRIFDQLGVYADLEQCTVPIHTMRVRFPDGFSFSSELPRCVQERFGYPIVSLDRQKVLEILHDRYPAKSNIHINKRVTEIRQTEREAQVVTDDGAVYKGDLVVGADGIHSAVRAEMWRQAKGLVGRRDGQAFAVEYACVFGISTPIPGLESGEHVNSYSDGLCVITFHGKDGRIFWFILIKLHKRFVYPKTPRFSASDAAKVCAEYASVPVWGEICVRDLWRNKTSASMTALEEGLLKTWNFKRVVLLGDSIHKMTPNIGQGANTAAEDAAVLASLLQRLSTSASSTTSGTIDAVLREYVSLRYKRVKSTYQRAYFGARLHTRDNVLKCFVGRYIFPRFSQQVLERTSQAIAGAPLVDFLPTPKRSGAGWSDYAGSPEVGAPTVPWLVISLPVLASVLCYLMFA</sequence>
<evidence type="ECO:0000250" key="1">
    <source>
        <dbReference type="UniProtKB" id="B8M9J8"/>
    </source>
</evidence>
<evidence type="ECO:0000250" key="2">
    <source>
        <dbReference type="UniProtKB" id="C8VQ98"/>
    </source>
</evidence>
<evidence type="ECO:0000255" key="3"/>
<evidence type="ECO:0000269" key="4">
    <source>
    </source>
</evidence>
<evidence type="ECO:0000269" key="5">
    <source>
    </source>
</evidence>
<evidence type="ECO:0000303" key="6">
    <source>
    </source>
</evidence>
<evidence type="ECO:0000305" key="7"/>
<evidence type="ECO:0000305" key="8">
    <source>
    </source>
</evidence>
<evidence type="ECO:0000305" key="9">
    <source>
    </source>
</evidence>
<organism>
    <name type="scientific">Aspergillus calidoustus</name>
    <dbReference type="NCBI Taxonomy" id="454130"/>
    <lineage>
        <taxon>Eukaryota</taxon>
        <taxon>Fungi</taxon>
        <taxon>Dikarya</taxon>
        <taxon>Ascomycota</taxon>
        <taxon>Pezizomycotina</taxon>
        <taxon>Eurotiomycetes</taxon>
        <taxon>Eurotiomycetidae</taxon>
        <taxon>Eurotiales</taxon>
        <taxon>Aspergillaceae</taxon>
        <taxon>Aspergillus</taxon>
        <taxon>Aspergillus subgen. Nidulantes</taxon>
    </lineage>
</organism>
<gene>
    <name evidence="6" type="primary">ausM</name>
    <name type="ORF">ASPCAL14376</name>
</gene>
<dbReference type="EC" id="1.-.-.-" evidence="8"/>
<dbReference type="EMBL" id="CDMC01000024">
    <property type="protein sequence ID" value="CEL11273.1"/>
    <property type="molecule type" value="Genomic_DNA"/>
</dbReference>
<dbReference type="SMR" id="A0A0U5CJU6"/>
<dbReference type="STRING" id="454130.A0A0U5CJU6"/>
<dbReference type="OMA" id="SIGLWPN"/>
<dbReference type="OrthoDB" id="10029326at2759"/>
<dbReference type="UniPathway" id="UPA00213"/>
<dbReference type="Proteomes" id="UP000054771">
    <property type="component" value="Unassembled WGS sequence"/>
</dbReference>
<dbReference type="GO" id="GO:0016020">
    <property type="term" value="C:membrane"/>
    <property type="evidence" value="ECO:0007669"/>
    <property type="project" value="UniProtKB-SubCell"/>
</dbReference>
<dbReference type="GO" id="GO:0071949">
    <property type="term" value="F:FAD binding"/>
    <property type="evidence" value="ECO:0007669"/>
    <property type="project" value="InterPro"/>
</dbReference>
<dbReference type="GO" id="GO:0004497">
    <property type="term" value="F:monooxygenase activity"/>
    <property type="evidence" value="ECO:0007669"/>
    <property type="project" value="UniProtKB-KW"/>
</dbReference>
<dbReference type="GO" id="GO:0016114">
    <property type="term" value="P:terpenoid biosynthetic process"/>
    <property type="evidence" value="ECO:0007669"/>
    <property type="project" value="UniProtKB-UniPathway"/>
</dbReference>
<dbReference type="Gene3D" id="3.50.50.60">
    <property type="entry name" value="FAD/NAD(P)-binding domain"/>
    <property type="match status" value="1"/>
</dbReference>
<dbReference type="InterPro" id="IPR002938">
    <property type="entry name" value="FAD-bd"/>
</dbReference>
<dbReference type="InterPro" id="IPR036188">
    <property type="entry name" value="FAD/NAD-bd_sf"/>
</dbReference>
<dbReference type="InterPro" id="IPR050562">
    <property type="entry name" value="FAD_mOase_fung"/>
</dbReference>
<dbReference type="PANTHER" id="PTHR47356:SF2">
    <property type="entry name" value="FAD-BINDING DOMAIN-CONTAINING PROTEIN-RELATED"/>
    <property type="match status" value="1"/>
</dbReference>
<dbReference type="PANTHER" id="PTHR47356">
    <property type="entry name" value="FAD-DEPENDENT MONOOXYGENASE ASQG-RELATED"/>
    <property type="match status" value="1"/>
</dbReference>
<dbReference type="Pfam" id="PF01494">
    <property type="entry name" value="FAD_binding_3"/>
    <property type="match status" value="1"/>
</dbReference>
<dbReference type="PRINTS" id="PR00420">
    <property type="entry name" value="RNGMNOXGNASE"/>
</dbReference>
<dbReference type="SUPFAM" id="SSF51905">
    <property type="entry name" value="FAD/NAD(P)-binding domain"/>
    <property type="match status" value="1"/>
</dbReference>
<protein>
    <recommendedName>
        <fullName evidence="6">FAD-dependent monooxygenase ausM</fullName>
        <ecNumber evidence="8">1.-.-.-</ecNumber>
    </recommendedName>
    <alternativeName>
        <fullName evidence="6">Austinoid biosynthesis cluster protein M</fullName>
    </alternativeName>
</protein>
<comment type="function">
    <text evidence="2 4 5">FAD-dependent monooxygenase; part of the gene cluster that mediates the biosynthesis of calidodehydroaustin, a fungal meroterpenoid (PubMed:28233494, PubMed:29076725). The first step of the pathway is the synthesis of 3,5-dimethylorsellinic acid by the polyketide synthase ausA (PubMed:28233494). 3,5-dimethylorsellinic acid is then prenylated by the polyprenyl transferase ausN (PubMed:28233494). Further epoxidation by the FAD-dependent monooxygenase ausM and cyclization by the probable terpene cyclase ausL lead to the formation of protoaustinoid A (By similarity). Protoaustinoid A is then oxidized to spiro-lactone preaustinoid A3 by the combined action of the FAD-binding monooxygenases ausB and ausC, and the dioxygenase ausE (By similarity). Acid-catalyzed keto-rearrangement and ring contraction of the tetraketide portion of preaustinoid A3 by ausJ lead to the formation of preaustinoid A4 (By similarity). The aldo-keto reductase ausK, with the help of ausH, is involved in the next step by transforming preaustinoid A4 into isoaustinone which is in turn hydroxylated by the P450 monooxygenase ausI to form austinolide (By similarity). The cytochrome P450 monooxygenase ausG modifies austinolide to austinol (By similarity). Austinol is further acetylated to austin by the O-acetyltransferase ausP, which spontaneously changes to dehydroaustin (PubMed:28233494). The cytochrome P450 monooxygenase ausR then converts dehydroaustin is into 7-dehydrodehydroaustin (PubMed:28233494). The hydroxylation catalyzed by ausR permits the O-acetyltransferase ausQ to add an additional acetyl group to the molecule, leading to the formation of acetoxydehydroaustin (PubMed:28233494). The short chain dehydrogenase ausT catalyzes the reduction of the double bond present between carbon atoms 1 and 2 to convert 7-dehydrodehydroaustin into 1,2-dihydro-7-hydroxydehydroaustin (PubMed:28233494). AusQ catalyzes not only an acetylation reaction but also the addition of the PKS ausV diketide product to 1,2-dihydro-7-hydroxydehydroaustin, forming precalidodehydroaustin (PubMed:28233494). Finally, the iron/alpha-ketoglutarate-dependent dioxygenase converts precalidodehydroaustin into calidodehydroaustin (PubMed:28233494).</text>
</comment>
<comment type="cofactor">
    <cofactor evidence="7">
        <name>FAD</name>
        <dbReference type="ChEBI" id="CHEBI:57692"/>
    </cofactor>
</comment>
<comment type="pathway">
    <text evidence="8">Secondary metabolite biosynthesis; terpenoid biosynthesis.</text>
</comment>
<comment type="subcellular location">
    <subcellularLocation>
        <location evidence="3">Membrane</location>
        <topology evidence="3">Single-pass membrane protein</topology>
    </subcellularLocation>
</comment>
<comment type="miscellaneous">
    <text evidence="9">In A.calidoustus, the austinoid gene cluster lies on a contiguous DNA region, while clusters from E.nidulans and P.brasilianum are split in their respective genomes. Genetic rearrangements provoked variability among the clusters and E.nidulans produces the least number of austionoid derivatives with the end products austinol and dehydroaustinol, while P.brasilianum can produce until acetoxydehydroaustin, and A.calidoustus produces the highest number of identified derivatives.</text>
</comment>
<comment type="similarity">
    <text evidence="7">Belongs to the paxM FAD-dependent monooxygenase family.</text>
</comment>